<evidence type="ECO:0000255" key="1">
    <source>
        <dbReference type="HAMAP-Rule" id="MF_01077"/>
    </source>
</evidence>
<name>RIMP_MYCTA</name>
<protein>
    <recommendedName>
        <fullName evidence="1">Ribosome maturation factor RimP</fullName>
    </recommendedName>
</protein>
<organism>
    <name type="scientific">Mycobacterium tuberculosis (strain ATCC 25177 / H37Ra)</name>
    <dbReference type="NCBI Taxonomy" id="419947"/>
    <lineage>
        <taxon>Bacteria</taxon>
        <taxon>Bacillati</taxon>
        <taxon>Actinomycetota</taxon>
        <taxon>Actinomycetes</taxon>
        <taxon>Mycobacteriales</taxon>
        <taxon>Mycobacteriaceae</taxon>
        <taxon>Mycobacterium</taxon>
        <taxon>Mycobacterium tuberculosis complex</taxon>
    </lineage>
</organism>
<sequence>MTTGLPSQRQVIELLGADFACAGYEIEDVVIDARARPPRIAVIADGDAPLDLDTIAALSRRASALLDGLDGANKIRGRYLLEVSSPGVERPLTSEKHFRRARGRKVELVLSDGSRLTGRVGEMRAGTVALVIREDRGWAVREIPLAEIVKAVVQVEFSPPAPAELELAQSSEMGLARGTEAGA</sequence>
<feature type="chain" id="PRO_1000064736" description="Ribosome maturation factor RimP">
    <location>
        <begin position="1"/>
        <end position="183"/>
    </location>
</feature>
<proteinExistence type="inferred from homology"/>
<dbReference type="EMBL" id="CP000611">
    <property type="protein sequence ID" value="ABQ74644.1"/>
    <property type="molecule type" value="Genomic_DNA"/>
</dbReference>
<dbReference type="RefSeq" id="WP_003899507.1">
    <property type="nucleotide sequence ID" value="NZ_CP016972.1"/>
</dbReference>
<dbReference type="SMR" id="A5U6J4"/>
<dbReference type="GeneID" id="45426829"/>
<dbReference type="KEGG" id="mra:MRA_2865"/>
<dbReference type="eggNOG" id="COG0779">
    <property type="taxonomic scope" value="Bacteria"/>
</dbReference>
<dbReference type="HOGENOM" id="CLU_070525_3_0_11"/>
<dbReference type="Proteomes" id="UP000001988">
    <property type="component" value="Chromosome"/>
</dbReference>
<dbReference type="GO" id="GO:0005829">
    <property type="term" value="C:cytosol"/>
    <property type="evidence" value="ECO:0007669"/>
    <property type="project" value="TreeGrafter"/>
</dbReference>
<dbReference type="GO" id="GO:0000028">
    <property type="term" value="P:ribosomal small subunit assembly"/>
    <property type="evidence" value="ECO:0007669"/>
    <property type="project" value="TreeGrafter"/>
</dbReference>
<dbReference type="GO" id="GO:0006412">
    <property type="term" value="P:translation"/>
    <property type="evidence" value="ECO:0007669"/>
    <property type="project" value="TreeGrafter"/>
</dbReference>
<dbReference type="CDD" id="cd01734">
    <property type="entry name" value="YlxS_C"/>
    <property type="match status" value="1"/>
</dbReference>
<dbReference type="Gene3D" id="3.30.300.70">
    <property type="entry name" value="RimP-like superfamily, N-terminal"/>
    <property type="match status" value="1"/>
</dbReference>
<dbReference type="HAMAP" id="MF_01077">
    <property type="entry name" value="RimP"/>
    <property type="match status" value="1"/>
</dbReference>
<dbReference type="InterPro" id="IPR003728">
    <property type="entry name" value="Ribosome_maturation_RimP"/>
</dbReference>
<dbReference type="InterPro" id="IPR028998">
    <property type="entry name" value="RimP_C"/>
</dbReference>
<dbReference type="InterPro" id="IPR036847">
    <property type="entry name" value="RimP_C_sf"/>
</dbReference>
<dbReference type="InterPro" id="IPR028989">
    <property type="entry name" value="RimP_N"/>
</dbReference>
<dbReference type="InterPro" id="IPR035956">
    <property type="entry name" value="RimP_N_sf"/>
</dbReference>
<dbReference type="NCBIfam" id="NF000930">
    <property type="entry name" value="PRK00092.2-2"/>
    <property type="match status" value="1"/>
</dbReference>
<dbReference type="PANTHER" id="PTHR33867">
    <property type="entry name" value="RIBOSOME MATURATION FACTOR RIMP"/>
    <property type="match status" value="1"/>
</dbReference>
<dbReference type="PANTHER" id="PTHR33867:SF1">
    <property type="entry name" value="RIBOSOME MATURATION FACTOR RIMP"/>
    <property type="match status" value="1"/>
</dbReference>
<dbReference type="Pfam" id="PF17384">
    <property type="entry name" value="DUF150_C"/>
    <property type="match status" value="1"/>
</dbReference>
<dbReference type="Pfam" id="PF02576">
    <property type="entry name" value="RimP_N"/>
    <property type="match status" value="1"/>
</dbReference>
<dbReference type="SUPFAM" id="SSF74942">
    <property type="entry name" value="YhbC-like, C-terminal domain"/>
    <property type="match status" value="1"/>
</dbReference>
<dbReference type="SUPFAM" id="SSF75420">
    <property type="entry name" value="YhbC-like, N-terminal domain"/>
    <property type="match status" value="1"/>
</dbReference>
<accession>A5U6J4</accession>
<gene>
    <name evidence="1" type="primary">rimP</name>
    <name type="ordered locus">MRA_2865</name>
</gene>
<keyword id="KW-0963">Cytoplasm</keyword>
<keyword id="KW-1185">Reference proteome</keyword>
<keyword id="KW-0690">Ribosome biogenesis</keyword>
<reference key="1">
    <citation type="journal article" date="2008" name="PLoS ONE">
        <title>Genetic basis of virulence attenuation revealed by comparative genomic analysis of Mycobacterium tuberculosis strain H37Ra versus H37Rv.</title>
        <authorList>
            <person name="Zheng H."/>
            <person name="Lu L."/>
            <person name="Wang B."/>
            <person name="Pu S."/>
            <person name="Zhang X."/>
            <person name="Zhu G."/>
            <person name="Shi W."/>
            <person name="Zhang L."/>
            <person name="Wang H."/>
            <person name="Wang S."/>
            <person name="Zhao G."/>
            <person name="Zhang Y."/>
        </authorList>
    </citation>
    <scope>NUCLEOTIDE SEQUENCE [LARGE SCALE GENOMIC DNA]</scope>
    <source>
        <strain>ATCC 25177 / H37Ra</strain>
    </source>
</reference>
<comment type="function">
    <text evidence="1">Required for maturation of 30S ribosomal subunits.</text>
</comment>
<comment type="subcellular location">
    <subcellularLocation>
        <location evidence="1">Cytoplasm</location>
    </subcellularLocation>
</comment>
<comment type="similarity">
    <text evidence="1">Belongs to the RimP family.</text>
</comment>